<sequence>MQGTLSVWLAKRGLVHRSLGFDYQGIETLQIKPEDWHSIAVILYVYGYNYLRSQCAYDVAPGGLLASVYHLTRIEYGVNQAEEVCIKVFTHRSNPRIPSVFWVWKSTDFQERESYDMLGITYDSHPRLKRILMPESWIGWPLRKDYIAPNFYEIQDAY</sequence>
<reference key="1">
    <citation type="submission" date="2007-03" db="EMBL/GenBank/DDBJ databases">
        <title>Sequencing analysis of Lobularia maritima chloroplast DNA.</title>
        <authorList>
            <person name="Hosouchi T."/>
            <person name="Tsuruoka H."/>
            <person name="Kotani H."/>
        </authorList>
    </citation>
    <scope>NUCLEOTIDE SEQUENCE [LARGE SCALE GENOMIC DNA]</scope>
</reference>
<feature type="chain" id="PRO_0000358279" description="NAD(P)H-quinone oxidoreductase subunit J, chloroplastic">
    <location>
        <begin position="1"/>
        <end position="158"/>
    </location>
</feature>
<organism>
    <name type="scientific">Lobularia maritima</name>
    <name type="common">Sweet alyssum</name>
    <name type="synonym">Alyssum maritimum</name>
    <dbReference type="NCBI Taxonomy" id="226051"/>
    <lineage>
        <taxon>Eukaryota</taxon>
        <taxon>Viridiplantae</taxon>
        <taxon>Streptophyta</taxon>
        <taxon>Embryophyta</taxon>
        <taxon>Tracheophyta</taxon>
        <taxon>Spermatophyta</taxon>
        <taxon>Magnoliopsida</taxon>
        <taxon>eudicotyledons</taxon>
        <taxon>Gunneridae</taxon>
        <taxon>Pentapetalae</taxon>
        <taxon>rosids</taxon>
        <taxon>malvids</taxon>
        <taxon>Brassicales</taxon>
        <taxon>Brassicaceae</taxon>
        <taxon>Anastaticeae</taxon>
        <taxon>Lobularia</taxon>
    </lineage>
</organism>
<gene>
    <name evidence="1" type="primary">ndhJ</name>
</gene>
<proteinExistence type="inferred from homology"/>
<comment type="function">
    <text evidence="1">NDH shuttles electrons from NAD(P)H:plastoquinone, via FMN and iron-sulfur (Fe-S) centers, to quinones in the photosynthetic chain and possibly in a chloroplast respiratory chain. The immediate electron acceptor for the enzyme in this species is believed to be plastoquinone. Couples the redox reaction to proton translocation, and thus conserves the redox energy in a proton gradient.</text>
</comment>
<comment type="catalytic activity">
    <reaction evidence="1">
        <text>a plastoquinone + NADH + (n+1) H(+)(in) = a plastoquinol + NAD(+) + n H(+)(out)</text>
        <dbReference type="Rhea" id="RHEA:42608"/>
        <dbReference type="Rhea" id="RHEA-COMP:9561"/>
        <dbReference type="Rhea" id="RHEA-COMP:9562"/>
        <dbReference type="ChEBI" id="CHEBI:15378"/>
        <dbReference type="ChEBI" id="CHEBI:17757"/>
        <dbReference type="ChEBI" id="CHEBI:57540"/>
        <dbReference type="ChEBI" id="CHEBI:57945"/>
        <dbReference type="ChEBI" id="CHEBI:62192"/>
    </reaction>
</comment>
<comment type="catalytic activity">
    <reaction evidence="1">
        <text>a plastoquinone + NADPH + (n+1) H(+)(in) = a plastoquinol + NADP(+) + n H(+)(out)</text>
        <dbReference type="Rhea" id="RHEA:42612"/>
        <dbReference type="Rhea" id="RHEA-COMP:9561"/>
        <dbReference type="Rhea" id="RHEA-COMP:9562"/>
        <dbReference type="ChEBI" id="CHEBI:15378"/>
        <dbReference type="ChEBI" id="CHEBI:17757"/>
        <dbReference type="ChEBI" id="CHEBI:57783"/>
        <dbReference type="ChEBI" id="CHEBI:58349"/>
        <dbReference type="ChEBI" id="CHEBI:62192"/>
    </reaction>
</comment>
<comment type="subunit">
    <text evidence="1">NDH is composed of at least 16 different subunits, 5 of which are encoded in the nucleus.</text>
</comment>
<comment type="subcellular location">
    <subcellularLocation>
        <location evidence="1">Plastid</location>
        <location evidence="1">Chloroplast thylakoid membrane</location>
        <topology evidence="1">Peripheral membrane protein</topology>
        <orientation evidence="1">Stromal side</orientation>
    </subcellularLocation>
</comment>
<comment type="similarity">
    <text evidence="1">Belongs to the complex I 30 kDa subunit family.</text>
</comment>
<dbReference type="EC" id="7.1.1.-" evidence="1"/>
<dbReference type="EMBL" id="AP009375">
    <property type="protein sequence ID" value="BAF50552.1"/>
    <property type="molecule type" value="Genomic_DNA"/>
</dbReference>
<dbReference type="RefSeq" id="YP_001123728.1">
    <property type="nucleotide sequence ID" value="NC_009274.1"/>
</dbReference>
<dbReference type="SMR" id="A4QLJ7"/>
<dbReference type="GeneID" id="4964906"/>
<dbReference type="GO" id="GO:0009535">
    <property type="term" value="C:chloroplast thylakoid membrane"/>
    <property type="evidence" value="ECO:0007669"/>
    <property type="project" value="UniProtKB-SubCell"/>
</dbReference>
<dbReference type="GO" id="GO:0008137">
    <property type="term" value="F:NADH dehydrogenase (ubiquinone) activity"/>
    <property type="evidence" value="ECO:0007669"/>
    <property type="project" value="InterPro"/>
</dbReference>
<dbReference type="GO" id="GO:0048038">
    <property type="term" value="F:quinone binding"/>
    <property type="evidence" value="ECO:0007669"/>
    <property type="project" value="UniProtKB-KW"/>
</dbReference>
<dbReference type="GO" id="GO:0019684">
    <property type="term" value="P:photosynthesis, light reaction"/>
    <property type="evidence" value="ECO:0007669"/>
    <property type="project" value="UniProtKB-UniRule"/>
</dbReference>
<dbReference type="FunFam" id="3.30.460.80:FF:000004">
    <property type="entry name" value="NAD(P)H-quinone oxidoreductase subunit J, chloroplastic"/>
    <property type="match status" value="1"/>
</dbReference>
<dbReference type="Gene3D" id="3.30.460.80">
    <property type="entry name" value="NADH:ubiquinone oxidoreductase, 30kDa subunit"/>
    <property type="match status" value="1"/>
</dbReference>
<dbReference type="HAMAP" id="MF_01357">
    <property type="entry name" value="NDH1_NuoC"/>
    <property type="match status" value="1"/>
</dbReference>
<dbReference type="InterPro" id="IPR010218">
    <property type="entry name" value="NADH_DH_suC"/>
</dbReference>
<dbReference type="InterPro" id="IPR037232">
    <property type="entry name" value="NADH_quin_OxRdtase_su_C/D-like"/>
</dbReference>
<dbReference type="InterPro" id="IPR001268">
    <property type="entry name" value="NADH_UbQ_OxRdtase_30kDa_su"/>
</dbReference>
<dbReference type="InterPro" id="IPR020396">
    <property type="entry name" value="NADH_UbQ_OxRdtase_CS"/>
</dbReference>
<dbReference type="NCBIfam" id="NF009141">
    <property type="entry name" value="PRK12494.1"/>
    <property type="match status" value="1"/>
</dbReference>
<dbReference type="PANTHER" id="PTHR10884:SF14">
    <property type="entry name" value="NADH DEHYDROGENASE [UBIQUINONE] IRON-SULFUR PROTEIN 3, MITOCHONDRIAL"/>
    <property type="match status" value="1"/>
</dbReference>
<dbReference type="PANTHER" id="PTHR10884">
    <property type="entry name" value="NADH DEHYDROGENASE UBIQUINONE IRON-SULFUR PROTEIN 3"/>
    <property type="match status" value="1"/>
</dbReference>
<dbReference type="Pfam" id="PF00329">
    <property type="entry name" value="Complex1_30kDa"/>
    <property type="match status" value="1"/>
</dbReference>
<dbReference type="SUPFAM" id="SSF143243">
    <property type="entry name" value="Nqo5-like"/>
    <property type="match status" value="1"/>
</dbReference>
<dbReference type="PROSITE" id="PS00542">
    <property type="entry name" value="COMPLEX1_30K"/>
    <property type="match status" value="1"/>
</dbReference>
<name>NDHJ_LOBMA</name>
<protein>
    <recommendedName>
        <fullName evidence="1">NAD(P)H-quinone oxidoreductase subunit J, chloroplastic</fullName>
        <ecNumber evidence="1">7.1.1.-</ecNumber>
    </recommendedName>
    <alternativeName>
        <fullName>NAD(P)H dehydrogenase subunit J</fullName>
    </alternativeName>
    <alternativeName>
        <fullName evidence="1">NADH-plastoquinone oxidoreductase subunit J</fullName>
    </alternativeName>
</protein>
<geneLocation type="chloroplast"/>
<evidence type="ECO:0000255" key="1">
    <source>
        <dbReference type="HAMAP-Rule" id="MF_01357"/>
    </source>
</evidence>
<accession>A4QLJ7</accession>
<keyword id="KW-0150">Chloroplast</keyword>
<keyword id="KW-0472">Membrane</keyword>
<keyword id="KW-0520">NAD</keyword>
<keyword id="KW-0521">NADP</keyword>
<keyword id="KW-0934">Plastid</keyword>
<keyword id="KW-0618">Plastoquinone</keyword>
<keyword id="KW-0874">Quinone</keyword>
<keyword id="KW-0793">Thylakoid</keyword>
<keyword id="KW-1278">Translocase</keyword>
<keyword id="KW-0813">Transport</keyword>